<organism>
    <name type="scientific">Drosophila melanogaster</name>
    <name type="common">Fruit fly</name>
    <dbReference type="NCBI Taxonomy" id="7227"/>
    <lineage>
        <taxon>Eukaryota</taxon>
        <taxon>Metazoa</taxon>
        <taxon>Ecdysozoa</taxon>
        <taxon>Arthropoda</taxon>
        <taxon>Hexapoda</taxon>
        <taxon>Insecta</taxon>
        <taxon>Pterygota</taxon>
        <taxon>Neoptera</taxon>
        <taxon>Endopterygota</taxon>
        <taxon>Diptera</taxon>
        <taxon>Brachycera</taxon>
        <taxon>Muscomorpha</taxon>
        <taxon>Ephydroidea</taxon>
        <taxon>Drosophilidae</taxon>
        <taxon>Drosophila</taxon>
        <taxon>Sophophora</taxon>
    </lineage>
</organism>
<sequence>MVSRNIESTSKVPTFHVIREVYDSSNAHERFEAELDKALEAKLDFIVIEPPRLGDETGRWIWVGNCLHKTAVATGVVSLVASLLWRDRPIIAAPACALSIFCTGLYTVSWNYDPCCQYQVENNDTVLEKLPLTDVSSPVILGYSPNSKTKYLHRSVSLLSAALCAWQIWRSYNRFVHSAGSG</sequence>
<accession>Q8IQ56</accession>
<accession>Q9VRP7</accession>
<proteinExistence type="evidence at protein level"/>
<comment type="function">
    <text evidence="4">Plays a role in mitochondrial morphogenesis.</text>
</comment>
<comment type="subcellular location">
    <subcellularLocation>
        <location evidence="7">Mitochondrion inner membrane</location>
        <topology evidence="7">Multi-pass membrane protein</topology>
    </subcellularLocation>
</comment>
<comment type="alternative products">
    <event type="alternative splicing"/>
    <isoform>
        <id>Q8IQ56-1</id>
        <name evidence="2">B</name>
        <sequence type="displayed"/>
    </isoform>
    <isoform>
        <id>Q8IQ56-2</id>
        <name evidence="2">A</name>
        <sequence type="described" ref="VSP_053044"/>
    </isoform>
</comment>
<comment type="similarity">
    <text evidence="1">Belongs to the TMEM11 family.</text>
</comment>
<gene>
    <name type="primary">Pmi</name>
    <name type="ORF">CG33718</name>
</gene>
<reference key="1">
    <citation type="journal article" date="2000" name="Science">
        <title>The genome sequence of Drosophila melanogaster.</title>
        <authorList>
            <person name="Adams M.D."/>
            <person name="Celniker S.E."/>
            <person name="Holt R.A."/>
            <person name="Evans C.A."/>
            <person name="Gocayne J.D."/>
            <person name="Amanatides P.G."/>
            <person name="Scherer S.E."/>
            <person name="Li P.W."/>
            <person name="Hoskins R.A."/>
            <person name="Galle R.F."/>
            <person name="George R.A."/>
            <person name="Lewis S.E."/>
            <person name="Richards S."/>
            <person name="Ashburner M."/>
            <person name="Henderson S.N."/>
            <person name="Sutton G.G."/>
            <person name="Wortman J.R."/>
            <person name="Yandell M.D."/>
            <person name="Zhang Q."/>
            <person name="Chen L.X."/>
            <person name="Brandon R.C."/>
            <person name="Rogers Y.-H.C."/>
            <person name="Blazej R.G."/>
            <person name="Champe M."/>
            <person name="Pfeiffer B.D."/>
            <person name="Wan K.H."/>
            <person name="Doyle C."/>
            <person name="Baxter E.G."/>
            <person name="Helt G."/>
            <person name="Nelson C.R."/>
            <person name="Miklos G.L.G."/>
            <person name="Abril J.F."/>
            <person name="Agbayani A."/>
            <person name="An H.-J."/>
            <person name="Andrews-Pfannkoch C."/>
            <person name="Baldwin D."/>
            <person name="Ballew R.M."/>
            <person name="Basu A."/>
            <person name="Baxendale J."/>
            <person name="Bayraktaroglu L."/>
            <person name="Beasley E.M."/>
            <person name="Beeson K.Y."/>
            <person name="Benos P.V."/>
            <person name="Berman B.P."/>
            <person name="Bhandari D."/>
            <person name="Bolshakov S."/>
            <person name="Borkova D."/>
            <person name="Botchan M.R."/>
            <person name="Bouck J."/>
            <person name="Brokstein P."/>
            <person name="Brottier P."/>
            <person name="Burtis K.C."/>
            <person name="Busam D.A."/>
            <person name="Butler H."/>
            <person name="Cadieu E."/>
            <person name="Center A."/>
            <person name="Chandra I."/>
            <person name="Cherry J.M."/>
            <person name="Cawley S."/>
            <person name="Dahlke C."/>
            <person name="Davenport L.B."/>
            <person name="Davies P."/>
            <person name="de Pablos B."/>
            <person name="Delcher A."/>
            <person name="Deng Z."/>
            <person name="Mays A.D."/>
            <person name="Dew I."/>
            <person name="Dietz S.M."/>
            <person name="Dodson K."/>
            <person name="Doup L.E."/>
            <person name="Downes M."/>
            <person name="Dugan-Rocha S."/>
            <person name="Dunkov B.C."/>
            <person name="Dunn P."/>
            <person name="Durbin K.J."/>
            <person name="Evangelista C.C."/>
            <person name="Ferraz C."/>
            <person name="Ferriera S."/>
            <person name="Fleischmann W."/>
            <person name="Fosler C."/>
            <person name="Gabrielian A.E."/>
            <person name="Garg N.S."/>
            <person name="Gelbart W.M."/>
            <person name="Glasser K."/>
            <person name="Glodek A."/>
            <person name="Gong F."/>
            <person name="Gorrell J.H."/>
            <person name="Gu Z."/>
            <person name="Guan P."/>
            <person name="Harris M."/>
            <person name="Harris N.L."/>
            <person name="Harvey D.A."/>
            <person name="Heiman T.J."/>
            <person name="Hernandez J.R."/>
            <person name="Houck J."/>
            <person name="Hostin D."/>
            <person name="Houston K.A."/>
            <person name="Howland T.J."/>
            <person name="Wei M.-H."/>
            <person name="Ibegwam C."/>
            <person name="Jalali M."/>
            <person name="Kalush F."/>
            <person name="Karpen G.H."/>
            <person name="Ke Z."/>
            <person name="Kennison J.A."/>
            <person name="Ketchum K.A."/>
            <person name="Kimmel B.E."/>
            <person name="Kodira C.D."/>
            <person name="Kraft C.L."/>
            <person name="Kravitz S."/>
            <person name="Kulp D."/>
            <person name="Lai Z."/>
            <person name="Lasko P."/>
            <person name="Lei Y."/>
            <person name="Levitsky A.A."/>
            <person name="Li J.H."/>
            <person name="Li Z."/>
            <person name="Liang Y."/>
            <person name="Lin X."/>
            <person name="Liu X."/>
            <person name="Mattei B."/>
            <person name="McIntosh T.C."/>
            <person name="McLeod M.P."/>
            <person name="McPherson D."/>
            <person name="Merkulov G."/>
            <person name="Milshina N.V."/>
            <person name="Mobarry C."/>
            <person name="Morris J."/>
            <person name="Moshrefi A."/>
            <person name="Mount S.M."/>
            <person name="Moy M."/>
            <person name="Murphy B."/>
            <person name="Murphy L."/>
            <person name="Muzny D.M."/>
            <person name="Nelson D.L."/>
            <person name="Nelson D.R."/>
            <person name="Nelson K.A."/>
            <person name="Nixon K."/>
            <person name="Nusskern D.R."/>
            <person name="Pacleb J.M."/>
            <person name="Palazzolo M."/>
            <person name="Pittman G.S."/>
            <person name="Pan S."/>
            <person name="Pollard J."/>
            <person name="Puri V."/>
            <person name="Reese M.G."/>
            <person name="Reinert K."/>
            <person name="Remington K."/>
            <person name="Saunders R.D.C."/>
            <person name="Scheeler F."/>
            <person name="Shen H."/>
            <person name="Shue B.C."/>
            <person name="Siden-Kiamos I."/>
            <person name="Simpson M."/>
            <person name="Skupski M.P."/>
            <person name="Smith T.J."/>
            <person name="Spier E."/>
            <person name="Spradling A.C."/>
            <person name="Stapleton M."/>
            <person name="Strong R."/>
            <person name="Sun E."/>
            <person name="Svirskas R."/>
            <person name="Tector C."/>
            <person name="Turner R."/>
            <person name="Venter E."/>
            <person name="Wang A.H."/>
            <person name="Wang X."/>
            <person name="Wang Z.-Y."/>
            <person name="Wassarman D.A."/>
            <person name="Weinstock G.M."/>
            <person name="Weissenbach J."/>
            <person name="Williams S.M."/>
            <person name="Woodage T."/>
            <person name="Worley K.C."/>
            <person name="Wu D."/>
            <person name="Yang S."/>
            <person name="Yao Q.A."/>
            <person name="Ye J."/>
            <person name="Yeh R.-F."/>
            <person name="Zaveri J.S."/>
            <person name="Zhan M."/>
            <person name="Zhang G."/>
            <person name="Zhao Q."/>
            <person name="Zheng L."/>
            <person name="Zheng X.H."/>
            <person name="Zhong F.N."/>
            <person name="Zhong W."/>
            <person name="Zhou X."/>
            <person name="Zhu S.C."/>
            <person name="Zhu X."/>
            <person name="Smith H.O."/>
            <person name="Gibbs R.A."/>
            <person name="Myers E.W."/>
            <person name="Rubin G.M."/>
            <person name="Venter J.C."/>
        </authorList>
    </citation>
    <scope>NUCLEOTIDE SEQUENCE [LARGE SCALE GENOMIC DNA]</scope>
    <source>
        <strain>Berkeley</strain>
    </source>
</reference>
<reference evidence="6" key="2">
    <citation type="journal article" date="2002" name="Genome Biol.">
        <title>Annotation of the Drosophila melanogaster euchromatic genome: a systematic review.</title>
        <authorList>
            <person name="Misra S."/>
            <person name="Crosby M.A."/>
            <person name="Mungall C.J."/>
            <person name="Matthews B.B."/>
            <person name="Campbell K.S."/>
            <person name="Hradecky P."/>
            <person name="Huang Y."/>
            <person name="Kaminker J.S."/>
            <person name="Millburn G.H."/>
            <person name="Prochnik S.E."/>
            <person name="Smith C.D."/>
            <person name="Tupy J.L."/>
            <person name="Whitfield E.J."/>
            <person name="Bayraktaroglu L."/>
            <person name="Berman B.P."/>
            <person name="Bettencourt B.R."/>
            <person name="Celniker S.E."/>
            <person name="de Grey A.D.N.J."/>
            <person name="Drysdale R.A."/>
            <person name="Harris N.L."/>
            <person name="Richter J."/>
            <person name="Russo S."/>
            <person name="Schroeder A.J."/>
            <person name="Shu S.Q."/>
            <person name="Stapleton M."/>
            <person name="Yamada C."/>
            <person name="Ashburner M."/>
            <person name="Gelbart W.M."/>
            <person name="Rubin G.M."/>
            <person name="Lewis S.E."/>
        </authorList>
    </citation>
    <scope>GENOME REANNOTATION</scope>
    <scope>ALTERNATIVE SPLICING</scope>
    <source>
        <strain>Berkeley</strain>
    </source>
</reference>
<reference evidence="6" key="3">
    <citation type="journal article" date="2000" name="Proc. Natl. Acad. Sci. U.S.A.">
        <title>A family of peptidoglycan recognition proteins in the fruit fly Drosophila melanogaster.</title>
        <authorList>
            <person name="Werner T."/>
            <person name="Liu G."/>
            <person name="Kang D."/>
            <person name="Ekengren S."/>
            <person name="Steiner H."/>
            <person name="Hultmark D."/>
        </authorList>
    </citation>
    <scope>IDENTIFICATION</scope>
</reference>
<reference evidence="6" key="4">
    <citation type="journal article" date="2008" name="J. Proteome Res.">
        <title>Phosphoproteome analysis of Drosophila melanogaster embryos.</title>
        <authorList>
            <person name="Zhai B."/>
            <person name="Villen J."/>
            <person name="Beausoleil S.A."/>
            <person name="Mintseris J."/>
            <person name="Gygi S.P."/>
        </authorList>
    </citation>
    <scope>PHOSPHORYLATION [LARGE SCALE ANALYSIS] AT SER-25</scope>
    <scope>IDENTIFICATION BY MASS SPECTROMETRY</scope>
    <source>
        <tissue evidence="3">Embryo</tissue>
    </source>
</reference>
<reference key="5">
    <citation type="journal article" date="2011" name="EMBO Rep.">
        <title>Inner-membrane proteins PMI/TMEM11 regulate mitochondrial morphogenesis independently of the DRP1/MFN fission/fusion pathways.</title>
        <authorList>
            <person name="Rival T."/>
            <person name="Macchi M."/>
            <person name="Arnaune-Pelloquin L."/>
            <person name="Poidevin M."/>
            <person name="Maillet F."/>
            <person name="Richard F."/>
            <person name="Fatmi A."/>
            <person name="Belenguer P."/>
            <person name="Royet J."/>
        </authorList>
    </citation>
    <scope>FUNCTION</scope>
    <scope>SUBCELLULAR LOCATION</scope>
</reference>
<protein>
    <recommendedName>
        <fullName>Transmembrane protein 11 homolog, mitochondrial</fullName>
    </recommendedName>
    <alternativeName>
        <fullName>Protein PMI</fullName>
    </alternativeName>
</protein>
<dbReference type="EMBL" id="AE014296">
    <property type="protein sequence ID" value="AAF50746.3"/>
    <property type="molecule type" value="Genomic_DNA"/>
</dbReference>
<dbReference type="EMBL" id="AE014296">
    <property type="protein sequence ID" value="AAN12113.3"/>
    <property type="molecule type" value="Genomic_DNA"/>
</dbReference>
<dbReference type="RefSeq" id="NP_001027109.2">
    <molecule id="Q8IQ56-1"/>
    <property type="nucleotide sequence ID" value="NM_001031938.3"/>
</dbReference>
<dbReference type="RefSeq" id="NP_001027110.2">
    <molecule id="Q8IQ56-2"/>
    <property type="nucleotide sequence ID" value="NM_001031939.3"/>
</dbReference>
<dbReference type="RefSeq" id="NP_001303405.1">
    <molecule id="Q8IQ56-2"/>
    <property type="nucleotide sequence ID" value="NM_001316476.1"/>
</dbReference>
<dbReference type="RefSeq" id="NP_001334670.1">
    <molecule id="Q8IQ56-2"/>
    <property type="nucleotide sequence ID" value="NM_001347759.1"/>
</dbReference>
<dbReference type="BioGRID" id="533697">
    <property type="interactions" value="16"/>
</dbReference>
<dbReference type="FunCoup" id="Q8IQ56">
    <property type="interactions" value="777"/>
</dbReference>
<dbReference type="IntAct" id="Q8IQ56">
    <property type="interactions" value="16"/>
</dbReference>
<dbReference type="MINT" id="Q8IQ56"/>
<dbReference type="STRING" id="7227.FBpp0289218"/>
<dbReference type="iPTMnet" id="Q8IQ56"/>
<dbReference type="PaxDb" id="7227-FBpp0289218"/>
<dbReference type="DNASU" id="3772100"/>
<dbReference type="EnsemblMetazoa" id="FBtr0299940">
    <molecule id="Q8IQ56-2"/>
    <property type="protein sequence ID" value="FBpp0289217"/>
    <property type="gene ID" value="FBgn0044419"/>
</dbReference>
<dbReference type="EnsemblMetazoa" id="FBtr0299941">
    <molecule id="Q8IQ56-1"/>
    <property type="protein sequence ID" value="FBpp0289218"/>
    <property type="gene ID" value="FBgn0044419"/>
</dbReference>
<dbReference type="EnsemblMetazoa" id="FBtr0347274">
    <molecule id="Q8IQ56-2"/>
    <property type="protein sequence ID" value="FBpp0312522"/>
    <property type="gene ID" value="FBgn0044419"/>
</dbReference>
<dbReference type="EnsemblMetazoa" id="FBtr0445398">
    <molecule id="Q8IQ56-2"/>
    <property type="protein sequence ID" value="FBpp0401566"/>
    <property type="gene ID" value="FBgn0044419"/>
</dbReference>
<dbReference type="GeneID" id="3772100"/>
<dbReference type="KEGG" id="dme:Dmel_CG33718"/>
<dbReference type="UCSC" id="CG33718-RC">
    <property type="organism name" value="d. melanogaster"/>
</dbReference>
<dbReference type="AGR" id="FB:FBgn0044419"/>
<dbReference type="CTD" id="3772100"/>
<dbReference type="FlyBase" id="FBgn0044419">
    <property type="gene designation" value="Pmi"/>
</dbReference>
<dbReference type="VEuPathDB" id="VectorBase:FBgn0044419"/>
<dbReference type="eggNOG" id="ENOG502QUAI">
    <property type="taxonomic scope" value="Eukaryota"/>
</dbReference>
<dbReference type="GeneTree" id="ENSGT00390000006617"/>
<dbReference type="InParanoid" id="Q8IQ56"/>
<dbReference type="OMA" id="FSKMAAW"/>
<dbReference type="OrthoDB" id="9970856at2759"/>
<dbReference type="PhylomeDB" id="Q8IQ56"/>
<dbReference type="BioGRID-ORCS" id="3772100">
    <property type="hits" value="0 hits in 1 CRISPR screen"/>
</dbReference>
<dbReference type="GenomeRNAi" id="3772100"/>
<dbReference type="PRO" id="PR:Q8IQ56"/>
<dbReference type="Proteomes" id="UP000000803">
    <property type="component" value="Chromosome 3L"/>
</dbReference>
<dbReference type="Bgee" id="FBgn0044419">
    <property type="expression patterns" value="Expressed in ovary and 11 other cell types or tissues"/>
</dbReference>
<dbReference type="GO" id="GO:0005743">
    <property type="term" value="C:mitochondrial inner membrane"/>
    <property type="evidence" value="ECO:0000314"/>
    <property type="project" value="UniProtKB"/>
</dbReference>
<dbReference type="GO" id="GO:0007007">
    <property type="term" value="P:inner mitochondrial membrane organization"/>
    <property type="evidence" value="ECO:0000315"/>
    <property type="project" value="FlyBase"/>
</dbReference>
<dbReference type="GO" id="GO:0007005">
    <property type="term" value="P:mitochondrion organization"/>
    <property type="evidence" value="ECO:0000315"/>
    <property type="project" value="UniProtKB"/>
</dbReference>
<dbReference type="InterPro" id="IPR026120">
    <property type="entry name" value="TMEM11"/>
</dbReference>
<dbReference type="PANTHER" id="PTHR15099">
    <property type="entry name" value="PROTEIN PM1"/>
    <property type="match status" value="1"/>
</dbReference>
<dbReference type="PANTHER" id="PTHR15099:SF2">
    <property type="entry name" value="TRANSMEMBRANE PROTEIN 11, MITOCHONDRIAL"/>
    <property type="match status" value="1"/>
</dbReference>
<dbReference type="Pfam" id="PF14972">
    <property type="entry name" value="Mito_morph_reg"/>
    <property type="match status" value="1"/>
</dbReference>
<name>TMM11_DROME</name>
<keyword id="KW-0025">Alternative splicing</keyword>
<keyword id="KW-0472">Membrane</keyword>
<keyword id="KW-0496">Mitochondrion</keyword>
<keyword id="KW-0999">Mitochondrion inner membrane</keyword>
<keyword id="KW-0597">Phosphoprotein</keyword>
<keyword id="KW-1185">Reference proteome</keyword>
<keyword id="KW-0812">Transmembrane</keyword>
<keyword id="KW-1133">Transmembrane helix</keyword>
<evidence type="ECO:0000255" key="1"/>
<evidence type="ECO:0000269" key="2">
    <source>
    </source>
</evidence>
<evidence type="ECO:0000269" key="3">
    <source>
    </source>
</evidence>
<evidence type="ECO:0000269" key="4">
    <source>
    </source>
</evidence>
<evidence type="ECO:0000303" key="5">
    <source>
    </source>
</evidence>
<evidence type="ECO:0000305" key="6"/>
<evidence type="ECO:0000305" key="7">
    <source>
    </source>
</evidence>
<feature type="chain" id="PRO_0000367035" description="Transmembrane protein 11 homolog, mitochondrial">
    <location>
        <begin position="1"/>
        <end position="182"/>
    </location>
</feature>
<feature type="transmembrane region" description="Helical" evidence="1">
    <location>
        <begin position="70"/>
        <end position="89"/>
    </location>
</feature>
<feature type="transmembrane region" description="Helical" evidence="1">
    <location>
        <begin position="91"/>
        <end position="108"/>
    </location>
</feature>
<feature type="modified residue" description="Phosphoserine" evidence="3">
    <location>
        <position position="25"/>
    </location>
</feature>
<feature type="splice variant" id="VSP_053044" description="In isoform A." evidence="5">
    <original>NRFVHSAGSG</original>
    <variation>K</variation>
    <location>
        <begin position="173"/>
        <end position="182"/>
    </location>
</feature>